<name>CLPX_RUEST</name>
<comment type="function">
    <text evidence="1">ATP-dependent specificity component of the Clp protease. It directs the protease to specific substrates. Can perform chaperone functions in the absence of ClpP.</text>
</comment>
<comment type="subunit">
    <text evidence="1">Component of the ClpX-ClpP complex. Forms a hexameric ring that, in the presence of ATP, binds to fourteen ClpP subunits assembled into a disk-like structure with a central cavity, resembling the structure of eukaryotic proteasomes.</text>
</comment>
<comment type="similarity">
    <text evidence="1">Belongs to the ClpX chaperone family.</text>
</comment>
<evidence type="ECO:0000255" key="1">
    <source>
        <dbReference type="HAMAP-Rule" id="MF_00175"/>
    </source>
</evidence>
<evidence type="ECO:0000255" key="2">
    <source>
        <dbReference type="PROSITE-ProRule" id="PRU01250"/>
    </source>
</evidence>
<organism>
    <name type="scientific">Ruegeria sp. (strain TM1040)</name>
    <name type="common">Silicibacter sp.</name>
    <dbReference type="NCBI Taxonomy" id="292414"/>
    <lineage>
        <taxon>Bacteria</taxon>
        <taxon>Pseudomonadati</taxon>
        <taxon>Pseudomonadota</taxon>
        <taxon>Alphaproteobacteria</taxon>
        <taxon>Rhodobacterales</taxon>
        <taxon>Roseobacteraceae</taxon>
        <taxon>Ruegeria</taxon>
    </lineage>
</organism>
<keyword id="KW-0067">ATP-binding</keyword>
<keyword id="KW-0143">Chaperone</keyword>
<keyword id="KW-0479">Metal-binding</keyword>
<keyword id="KW-0547">Nucleotide-binding</keyword>
<keyword id="KW-1185">Reference proteome</keyword>
<keyword id="KW-0862">Zinc</keyword>
<gene>
    <name evidence="1" type="primary">clpX</name>
    <name type="ordered locus">TM1040_1526</name>
</gene>
<accession>Q1GGF7</accession>
<protein>
    <recommendedName>
        <fullName evidence="1">ATP-dependent Clp protease ATP-binding subunit ClpX</fullName>
    </recommendedName>
</protein>
<proteinExistence type="inferred from homology"/>
<dbReference type="EMBL" id="CP000377">
    <property type="protein sequence ID" value="ABF64259.1"/>
    <property type="molecule type" value="Genomic_DNA"/>
</dbReference>
<dbReference type="RefSeq" id="WP_011538860.1">
    <property type="nucleotide sequence ID" value="NC_008044.1"/>
</dbReference>
<dbReference type="SMR" id="Q1GGF7"/>
<dbReference type="STRING" id="292414.TM1040_1526"/>
<dbReference type="KEGG" id="sit:TM1040_1526"/>
<dbReference type="eggNOG" id="COG1219">
    <property type="taxonomic scope" value="Bacteria"/>
</dbReference>
<dbReference type="HOGENOM" id="CLU_014218_8_2_5"/>
<dbReference type="OrthoDB" id="9804062at2"/>
<dbReference type="Proteomes" id="UP000000636">
    <property type="component" value="Chromosome"/>
</dbReference>
<dbReference type="GO" id="GO:0009376">
    <property type="term" value="C:HslUV protease complex"/>
    <property type="evidence" value="ECO:0007669"/>
    <property type="project" value="TreeGrafter"/>
</dbReference>
<dbReference type="GO" id="GO:0005524">
    <property type="term" value="F:ATP binding"/>
    <property type="evidence" value="ECO:0007669"/>
    <property type="project" value="UniProtKB-UniRule"/>
</dbReference>
<dbReference type="GO" id="GO:0016887">
    <property type="term" value="F:ATP hydrolysis activity"/>
    <property type="evidence" value="ECO:0007669"/>
    <property type="project" value="InterPro"/>
</dbReference>
<dbReference type="GO" id="GO:0140662">
    <property type="term" value="F:ATP-dependent protein folding chaperone"/>
    <property type="evidence" value="ECO:0007669"/>
    <property type="project" value="InterPro"/>
</dbReference>
<dbReference type="GO" id="GO:0046983">
    <property type="term" value="F:protein dimerization activity"/>
    <property type="evidence" value="ECO:0007669"/>
    <property type="project" value="InterPro"/>
</dbReference>
<dbReference type="GO" id="GO:0051082">
    <property type="term" value="F:unfolded protein binding"/>
    <property type="evidence" value="ECO:0007669"/>
    <property type="project" value="UniProtKB-UniRule"/>
</dbReference>
<dbReference type="GO" id="GO:0008270">
    <property type="term" value="F:zinc ion binding"/>
    <property type="evidence" value="ECO:0007669"/>
    <property type="project" value="InterPro"/>
</dbReference>
<dbReference type="GO" id="GO:0051301">
    <property type="term" value="P:cell division"/>
    <property type="evidence" value="ECO:0007669"/>
    <property type="project" value="TreeGrafter"/>
</dbReference>
<dbReference type="GO" id="GO:0051603">
    <property type="term" value="P:proteolysis involved in protein catabolic process"/>
    <property type="evidence" value="ECO:0007669"/>
    <property type="project" value="TreeGrafter"/>
</dbReference>
<dbReference type="CDD" id="cd19497">
    <property type="entry name" value="RecA-like_ClpX"/>
    <property type="match status" value="1"/>
</dbReference>
<dbReference type="FunFam" id="1.10.8.60:FF:000002">
    <property type="entry name" value="ATP-dependent Clp protease ATP-binding subunit ClpX"/>
    <property type="match status" value="1"/>
</dbReference>
<dbReference type="FunFam" id="3.40.50.300:FF:000005">
    <property type="entry name" value="ATP-dependent Clp protease ATP-binding subunit ClpX"/>
    <property type="match status" value="1"/>
</dbReference>
<dbReference type="Gene3D" id="1.10.8.60">
    <property type="match status" value="1"/>
</dbReference>
<dbReference type="Gene3D" id="6.20.220.10">
    <property type="entry name" value="ClpX chaperone, C4-type zinc finger domain"/>
    <property type="match status" value="1"/>
</dbReference>
<dbReference type="Gene3D" id="3.40.50.300">
    <property type="entry name" value="P-loop containing nucleotide triphosphate hydrolases"/>
    <property type="match status" value="1"/>
</dbReference>
<dbReference type="HAMAP" id="MF_00175">
    <property type="entry name" value="ClpX"/>
    <property type="match status" value="1"/>
</dbReference>
<dbReference type="InterPro" id="IPR003593">
    <property type="entry name" value="AAA+_ATPase"/>
</dbReference>
<dbReference type="InterPro" id="IPR050052">
    <property type="entry name" value="ATP-dep_Clp_protease_ClpX"/>
</dbReference>
<dbReference type="InterPro" id="IPR003959">
    <property type="entry name" value="ATPase_AAA_core"/>
</dbReference>
<dbReference type="InterPro" id="IPR019489">
    <property type="entry name" value="Clp_ATPase_C"/>
</dbReference>
<dbReference type="InterPro" id="IPR004487">
    <property type="entry name" value="Clp_protease_ATP-bd_su_ClpX"/>
</dbReference>
<dbReference type="InterPro" id="IPR046425">
    <property type="entry name" value="ClpX_bact"/>
</dbReference>
<dbReference type="InterPro" id="IPR027417">
    <property type="entry name" value="P-loop_NTPase"/>
</dbReference>
<dbReference type="InterPro" id="IPR010603">
    <property type="entry name" value="Znf_CppX_C4"/>
</dbReference>
<dbReference type="InterPro" id="IPR038366">
    <property type="entry name" value="Znf_CppX_C4_sf"/>
</dbReference>
<dbReference type="NCBIfam" id="TIGR00382">
    <property type="entry name" value="clpX"/>
    <property type="match status" value="1"/>
</dbReference>
<dbReference type="NCBIfam" id="NF003745">
    <property type="entry name" value="PRK05342.1"/>
    <property type="match status" value="1"/>
</dbReference>
<dbReference type="PANTHER" id="PTHR48102:SF7">
    <property type="entry name" value="ATP-DEPENDENT CLP PROTEASE ATP-BINDING SUBUNIT CLPX-LIKE, MITOCHONDRIAL"/>
    <property type="match status" value="1"/>
</dbReference>
<dbReference type="PANTHER" id="PTHR48102">
    <property type="entry name" value="ATP-DEPENDENT CLP PROTEASE ATP-BINDING SUBUNIT CLPX-LIKE, MITOCHONDRIAL-RELATED"/>
    <property type="match status" value="1"/>
</dbReference>
<dbReference type="Pfam" id="PF07724">
    <property type="entry name" value="AAA_2"/>
    <property type="match status" value="1"/>
</dbReference>
<dbReference type="Pfam" id="PF10431">
    <property type="entry name" value="ClpB_D2-small"/>
    <property type="match status" value="1"/>
</dbReference>
<dbReference type="Pfam" id="PF06689">
    <property type="entry name" value="zf-C4_ClpX"/>
    <property type="match status" value="1"/>
</dbReference>
<dbReference type="SMART" id="SM00382">
    <property type="entry name" value="AAA"/>
    <property type="match status" value="1"/>
</dbReference>
<dbReference type="SMART" id="SM01086">
    <property type="entry name" value="ClpB_D2-small"/>
    <property type="match status" value="1"/>
</dbReference>
<dbReference type="SMART" id="SM00994">
    <property type="entry name" value="zf-C4_ClpX"/>
    <property type="match status" value="1"/>
</dbReference>
<dbReference type="SUPFAM" id="SSF57716">
    <property type="entry name" value="Glucocorticoid receptor-like (DNA-binding domain)"/>
    <property type="match status" value="1"/>
</dbReference>
<dbReference type="SUPFAM" id="SSF52540">
    <property type="entry name" value="P-loop containing nucleoside triphosphate hydrolases"/>
    <property type="match status" value="1"/>
</dbReference>
<dbReference type="PROSITE" id="PS51902">
    <property type="entry name" value="CLPX_ZB"/>
    <property type="match status" value="1"/>
</dbReference>
<feature type="chain" id="PRO_1000024665" description="ATP-dependent Clp protease ATP-binding subunit ClpX">
    <location>
        <begin position="1"/>
        <end position="421"/>
    </location>
</feature>
<feature type="domain" description="ClpX-type ZB" evidence="2">
    <location>
        <begin position="3"/>
        <end position="56"/>
    </location>
</feature>
<feature type="binding site" evidence="2">
    <location>
        <position position="15"/>
    </location>
    <ligand>
        <name>Zn(2+)</name>
        <dbReference type="ChEBI" id="CHEBI:29105"/>
    </ligand>
</feature>
<feature type="binding site" evidence="2">
    <location>
        <position position="18"/>
    </location>
    <ligand>
        <name>Zn(2+)</name>
        <dbReference type="ChEBI" id="CHEBI:29105"/>
    </ligand>
</feature>
<feature type="binding site" evidence="2">
    <location>
        <position position="37"/>
    </location>
    <ligand>
        <name>Zn(2+)</name>
        <dbReference type="ChEBI" id="CHEBI:29105"/>
    </ligand>
</feature>
<feature type="binding site" evidence="2">
    <location>
        <position position="40"/>
    </location>
    <ligand>
        <name>Zn(2+)</name>
        <dbReference type="ChEBI" id="CHEBI:29105"/>
    </ligand>
</feature>
<feature type="binding site" evidence="1">
    <location>
        <begin position="120"/>
        <end position="127"/>
    </location>
    <ligand>
        <name>ATP</name>
        <dbReference type="ChEBI" id="CHEBI:30616"/>
    </ligand>
</feature>
<sequence>MATNSSGDSKNTLYCSFCGKSQHEVRKLIAGPTVFICDECVELCMDIIREETKASGMKATDGVPTPKDICEVLDDYVIGQATAKRVLSVAVHNHYKRLNHAQKAGNDIELSKSNILLIGPTGCGKTLLAQTLARILDVPFTMADATTLTEAGYVGEDVENIILKLLQASEYNVERAQRGIVYIDEVDKITRKSENPSITRDVSGEGVQQALLKLMEGTVASVPPQGGRKHPQQEFLQVDTTNILFICGGAFAGLDKIIKQRGKGSAMGFGADVREESDAGVGETFRDLEPEDLLKFGLIPEFVGRLPVLATLEDLDEDALITILTKPKNALVKQYQRLFELEDTELDFTDEALSAIAKKAIERKTGARGLRSILEDILLDTMFELPGMESVTKVVVNEEAVCSEAQPLMIHADEKESATAG</sequence>
<reference key="1">
    <citation type="submission" date="2006-05" db="EMBL/GenBank/DDBJ databases">
        <title>Complete sequence of chromosome of Silicibacter sp. TM1040.</title>
        <authorList>
            <consortium name="US DOE Joint Genome Institute"/>
            <person name="Copeland A."/>
            <person name="Lucas S."/>
            <person name="Lapidus A."/>
            <person name="Barry K."/>
            <person name="Detter J.C."/>
            <person name="Glavina del Rio T."/>
            <person name="Hammon N."/>
            <person name="Israni S."/>
            <person name="Dalin E."/>
            <person name="Tice H."/>
            <person name="Pitluck S."/>
            <person name="Brettin T."/>
            <person name="Bruce D."/>
            <person name="Han C."/>
            <person name="Tapia R."/>
            <person name="Goodwin L."/>
            <person name="Thompson L.S."/>
            <person name="Gilna P."/>
            <person name="Schmutz J."/>
            <person name="Larimer F."/>
            <person name="Land M."/>
            <person name="Hauser L."/>
            <person name="Kyrpides N."/>
            <person name="Kim E."/>
            <person name="Belas R."/>
            <person name="Moran M.A."/>
            <person name="Buchan A."/>
            <person name="Gonzalez J.M."/>
            <person name="Schell M.A."/>
            <person name="Sun F."/>
            <person name="Richardson P."/>
        </authorList>
    </citation>
    <scope>NUCLEOTIDE SEQUENCE [LARGE SCALE GENOMIC DNA]</scope>
    <source>
        <strain>TM1040</strain>
    </source>
</reference>